<comment type="catalytic activity">
    <reaction evidence="2">
        <text>an N-terminal (5-L-glutamyl)-[peptide] + an alpha-amino acid = 5-L-glutamyl amino acid + an N-terminal L-alpha-aminoacyl-[peptide]</text>
        <dbReference type="Rhea" id="RHEA:23904"/>
        <dbReference type="Rhea" id="RHEA-COMP:9780"/>
        <dbReference type="Rhea" id="RHEA-COMP:9795"/>
        <dbReference type="ChEBI" id="CHEBI:77644"/>
        <dbReference type="ChEBI" id="CHEBI:78597"/>
        <dbReference type="ChEBI" id="CHEBI:78599"/>
        <dbReference type="ChEBI" id="CHEBI:78608"/>
        <dbReference type="EC" id="2.3.2.2"/>
    </reaction>
</comment>
<comment type="catalytic activity">
    <reaction evidence="2">
        <text>glutathione + H2O = L-cysteinylglycine + L-glutamate</text>
        <dbReference type="Rhea" id="RHEA:28807"/>
        <dbReference type="ChEBI" id="CHEBI:15377"/>
        <dbReference type="ChEBI" id="CHEBI:29985"/>
        <dbReference type="ChEBI" id="CHEBI:57925"/>
        <dbReference type="ChEBI" id="CHEBI:61694"/>
        <dbReference type="EC" id="3.4.19.13"/>
    </reaction>
</comment>
<comment type="catalytic activity">
    <reaction evidence="2">
        <text>an S-substituted glutathione + H2O = an S-substituted L-cysteinylglycine + L-glutamate</text>
        <dbReference type="Rhea" id="RHEA:59468"/>
        <dbReference type="ChEBI" id="CHEBI:15377"/>
        <dbReference type="ChEBI" id="CHEBI:29985"/>
        <dbReference type="ChEBI" id="CHEBI:90779"/>
        <dbReference type="ChEBI" id="CHEBI:143103"/>
        <dbReference type="EC" id="3.4.19.13"/>
    </reaction>
</comment>
<comment type="pathway">
    <text>Sulfur metabolism; glutathione metabolism.</text>
</comment>
<comment type="subunit">
    <text evidence="2">This enzyme consists of two polypeptide chains, which are synthesized in precursor form from a single polypeptide.</text>
</comment>
<comment type="subcellular location">
    <subcellularLocation>
        <location evidence="1">Periplasm</location>
    </subcellularLocation>
</comment>
<comment type="PTM">
    <text>Cleaved by autocatalysis into a large and a small subunit.</text>
</comment>
<comment type="similarity">
    <text evidence="3">Belongs to the gamma-glutamyltransferase family.</text>
</comment>
<accession>P36267</accession>
<reference key="1">
    <citation type="journal article" date="1993" name="Biotechnol. Prog.">
        <title>Molecular cloning of the gamma-glutamyltranspeptidase gene from a Pseudomonas strain.</title>
        <authorList>
            <person name="Ishiye M."/>
            <person name="Yamashita M."/>
            <person name="Niwa M."/>
        </authorList>
    </citation>
    <scope>NUCLEOTIDE SEQUENCE [GENOMIC DNA]</scope>
    <scope>PARTIAL PROTEIN SEQUENCE</scope>
    <scope>CATALYTIC ACTIVITY</scope>
    <scope>SUBUNIT</scope>
    <scope>AUTOCATALYTIC CLEAVAGE</scope>
    <source>
        <strain>A14</strain>
    </source>
</reference>
<proteinExistence type="evidence at protein level"/>
<dbReference type="EC" id="3.4.19.13" evidence="2"/>
<dbReference type="EC" id="2.3.2.2" evidence="2"/>
<dbReference type="EMBL" id="S63255">
    <property type="protein sequence ID" value="AAC60442.1"/>
    <property type="molecule type" value="Genomic_DNA"/>
</dbReference>
<dbReference type="SMR" id="P36267"/>
<dbReference type="MEROPS" id="T03.001"/>
<dbReference type="UniPathway" id="UPA00204"/>
<dbReference type="GO" id="GO:0042597">
    <property type="term" value="C:periplasmic space"/>
    <property type="evidence" value="ECO:0007669"/>
    <property type="project" value="UniProtKB-SubCell"/>
</dbReference>
<dbReference type="GO" id="GO:0036374">
    <property type="term" value="F:glutathione hydrolase activity"/>
    <property type="evidence" value="ECO:0007669"/>
    <property type="project" value="UniProtKB-EC"/>
</dbReference>
<dbReference type="GO" id="GO:0103068">
    <property type="term" value="F:leukotriene C4 gamma-glutamyl transferase activity"/>
    <property type="evidence" value="ECO:0007669"/>
    <property type="project" value="UniProtKB-EC"/>
</dbReference>
<dbReference type="GO" id="GO:0006750">
    <property type="term" value="P:glutathione biosynthetic process"/>
    <property type="evidence" value="ECO:0007669"/>
    <property type="project" value="UniProtKB-KW"/>
</dbReference>
<dbReference type="GO" id="GO:0006751">
    <property type="term" value="P:glutathione catabolic process"/>
    <property type="evidence" value="ECO:0007669"/>
    <property type="project" value="InterPro"/>
</dbReference>
<dbReference type="GO" id="GO:0006508">
    <property type="term" value="P:proteolysis"/>
    <property type="evidence" value="ECO:0007669"/>
    <property type="project" value="UniProtKB-KW"/>
</dbReference>
<dbReference type="Gene3D" id="1.10.246.130">
    <property type="match status" value="1"/>
</dbReference>
<dbReference type="Gene3D" id="3.60.20.40">
    <property type="match status" value="1"/>
</dbReference>
<dbReference type="InterPro" id="IPR051792">
    <property type="entry name" value="GGT_bact"/>
</dbReference>
<dbReference type="InterPro" id="IPR055262">
    <property type="entry name" value="GGT_CS"/>
</dbReference>
<dbReference type="InterPro" id="IPR043138">
    <property type="entry name" value="GGT_lsub_C"/>
</dbReference>
<dbReference type="InterPro" id="IPR000101">
    <property type="entry name" value="GGT_peptidase"/>
</dbReference>
<dbReference type="InterPro" id="IPR043137">
    <property type="entry name" value="GGT_ssub"/>
</dbReference>
<dbReference type="InterPro" id="IPR029055">
    <property type="entry name" value="Ntn_hydrolases_N"/>
</dbReference>
<dbReference type="NCBIfam" id="TIGR00066">
    <property type="entry name" value="g_glut_trans"/>
    <property type="match status" value="1"/>
</dbReference>
<dbReference type="PANTHER" id="PTHR43199">
    <property type="entry name" value="GLUTATHIONE HYDROLASE"/>
    <property type="match status" value="1"/>
</dbReference>
<dbReference type="PANTHER" id="PTHR43199:SF1">
    <property type="entry name" value="GLUTATHIONE HYDROLASE PROENZYME"/>
    <property type="match status" value="1"/>
</dbReference>
<dbReference type="Pfam" id="PF01019">
    <property type="entry name" value="G_glu_transpept"/>
    <property type="match status" value="1"/>
</dbReference>
<dbReference type="PRINTS" id="PR01210">
    <property type="entry name" value="GGTRANSPTASE"/>
</dbReference>
<dbReference type="SUPFAM" id="SSF56235">
    <property type="entry name" value="N-terminal nucleophile aminohydrolases (Ntn hydrolases)"/>
    <property type="match status" value="1"/>
</dbReference>
<dbReference type="PROSITE" id="PS00462">
    <property type="entry name" value="G_GLU_TRANSPEPTIDASE"/>
    <property type="match status" value="1"/>
</dbReference>
<name>GGT_PSEUA</name>
<sequence>MKNQTFSKALLATALSCALFNVHAASQAPVGAENGMVVTAQHIASKVGVEVLKSGGNAIDAAVAVGYALAVVYPAAGNIGGGGFMTIQLADGRKTFLDFREKAPLAATANMYLDKDGNVIKGASTTGYLAVGVPGTVSGMEYAREKYGTKTRQQLISPAITLADKGFVLEQGDVDMLWTSTKDFEKDRANSGAIFMNKGQPFQPGERLVQKDLARTLRLISAKGTDGFYKGEVADKLVASMKAGGGIITQADLDQYKTRELAPVECDYRGYHVVSAPPPSSGGVVICEIMNILEGYPMKELGYHSAQGVHYTIEAMRHAYVDRNSYLGDPDFVKNPLAHLLDKDYAAKIRAAINPQKAGISQEIKPGVPPHEGSNTTHYSIVDKDGNAVSVTYTLNDWFGAKVMANGTGVLLNDEMDDFTSKVGVPNMYGLIQGEANAIGPGRRPLSSMSPTIVTKDGKTVMVVGTPGGSRIITATLLTMLNMIDYGMNLQEAVDAPRFHQQWMPESTNIEAFALSPDTQKILESWGQKFAGPQPANHIAAILVGAPSLGGKPIGKNRFYGANDPRRNTGLALGY</sequence>
<evidence type="ECO:0000250" key="1"/>
<evidence type="ECO:0000269" key="2">
    <source>
    </source>
</evidence>
<evidence type="ECO:0000305" key="3"/>
<feature type="signal peptide">
    <location>
        <begin position="1"/>
        <end position="24"/>
    </location>
</feature>
<feature type="chain" id="PRO_0000011054" description="Glutathione hydrolase large chain">
    <location>
        <begin position="25"/>
        <end position="375"/>
    </location>
</feature>
<feature type="chain" id="PRO_0000011055" description="Glutathione hydrolase small chain">
    <location>
        <begin position="376"/>
        <end position="575"/>
    </location>
</feature>
<feature type="active site" description="Nucleophile" evidence="1">
    <location>
        <position position="376"/>
    </location>
</feature>
<feature type="binding site" evidence="1">
    <location>
        <position position="100"/>
    </location>
    <ligand>
        <name>L-glutamate</name>
        <dbReference type="ChEBI" id="CHEBI:29985"/>
    </ligand>
</feature>
<feature type="binding site" evidence="1">
    <location>
        <position position="394"/>
    </location>
    <ligand>
        <name>L-glutamate</name>
        <dbReference type="ChEBI" id="CHEBI:29985"/>
    </ligand>
</feature>
<feature type="binding site" evidence="1">
    <location>
        <position position="396"/>
    </location>
    <ligand>
        <name>L-glutamate</name>
        <dbReference type="ChEBI" id="CHEBI:29985"/>
    </ligand>
</feature>
<feature type="binding site" evidence="1">
    <location>
        <position position="415"/>
    </location>
    <ligand>
        <name>L-glutamate</name>
        <dbReference type="ChEBI" id="CHEBI:29985"/>
    </ligand>
</feature>
<feature type="binding site" evidence="1">
    <location>
        <position position="418"/>
    </location>
    <ligand>
        <name>L-glutamate</name>
        <dbReference type="ChEBI" id="CHEBI:29985"/>
    </ligand>
</feature>
<feature type="binding site" evidence="1">
    <location>
        <begin position="447"/>
        <end position="448"/>
    </location>
    <ligand>
        <name>L-glutamate</name>
        <dbReference type="ChEBI" id="CHEBI:29985"/>
    </ligand>
</feature>
<feature type="binding site" evidence="1">
    <location>
        <begin position="468"/>
        <end position="469"/>
    </location>
    <ligand>
        <name>L-glutamate</name>
        <dbReference type="ChEBI" id="CHEBI:29985"/>
    </ligand>
</feature>
<protein>
    <recommendedName>
        <fullName>Glutathione hydrolase proenzyme</fullName>
        <ecNumber evidence="2">3.4.19.13</ecNumber>
    </recommendedName>
    <alternativeName>
        <fullName>Gamma-glutamyltranspeptidase proenzyme</fullName>
        <ecNumber evidence="2">2.3.2.2</ecNumber>
    </alternativeName>
    <component>
        <recommendedName>
            <fullName>Glutathione hydrolase large chain</fullName>
        </recommendedName>
    </component>
    <component>
        <recommendedName>
            <fullName>Glutathione hydrolase small chain</fullName>
        </recommendedName>
    </component>
</protein>
<organism>
    <name type="scientific">Pseudomonas sp. (strain A14)</name>
    <dbReference type="NCBI Taxonomy" id="69010"/>
    <lineage>
        <taxon>Bacteria</taxon>
        <taxon>Pseudomonadati</taxon>
        <taxon>Pseudomonadota</taxon>
    </lineage>
</organism>
<keyword id="KW-0012">Acyltransferase</keyword>
<keyword id="KW-0903">Direct protein sequencing</keyword>
<keyword id="KW-0317">Glutathione biosynthesis</keyword>
<keyword id="KW-0378">Hydrolase</keyword>
<keyword id="KW-0574">Periplasm</keyword>
<keyword id="KW-0645">Protease</keyword>
<keyword id="KW-0732">Signal</keyword>
<keyword id="KW-0808">Transferase</keyword>
<keyword id="KW-0865">Zymogen</keyword>
<gene>
    <name type="primary">ggt</name>
</gene>